<feature type="chain" id="PRO_0000208362" description="Acetyl-coenzyme A synthetase">
    <location>
        <begin position="1"/>
        <end position="652"/>
    </location>
</feature>
<feature type="binding site" evidence="1">
    <location>
        <begin position="191"/>
        <end position="194"/>
    </location>
    <ligand>
        <name>CoA</name>
        <dbReference type="ChEBI" id="CHEBI:57287"/>
    </ligand>
</feature>
<feature type="binding site" evidence="1">
    <location>
        <position position="311"/>
    </location>
    <ligand>
        <name>CoA</name>
        <dbReference type="ChEBI" id="CHEBI:57287"/>
    </ligand>
</feature>
<feature type="binding site" evidence="1">
    <location>
        <position position="335"/>
    </location>
    <ligand>
        <name>CoA</name>
        <dbReference type="ChEBI" id="CHEBI:57287"/>
    </ligand>
</feature>
<feature type="binding site" evidence="1">
    <location>
        <begin position="387"/>
        <end position="389"/>
    </location>
    <ligand>
        <name>ATP</name>
        <dbReference type="ChEBI" id="CHEBI:30616"/>
    </ligand>
</feature>
<feature type="binding site" evidence="1">
    <location>
        <begin position="411"/>
        <end position="416"/>
    </location>
    <ligand>
        <name>ATP</name>
        <dbReference type="ChEBI" id="CHEBI:30616"/>
    </ligand>
</feature>
<feature type="binding site" evidence="1">
    <location>
        <position position="500"/>
    </location>
    <ligand>
        <name>ATP</name>
        <dbReference type="ChEBI" id="CHEBI:30616"/>
    </ligand>
</feature>
<feature type="binding site" evidence="1">
    <location>
        <position position="515"/>
    </location>
    <ligand>
        <name>ATP</name>
        <dbReference type="ChEBI" id="CHEBI:30616"/>
    </ligand>
</feature>
<feature type="binding site" evidence="1">
    <location>
        <position position="523"/>
    </location>
    <ligand>
        <name>CoA</name>
        <dbReference type="ChEBI" id="CHEBI:57287"/>
    </ligand>
</feature>
<feature type="binding site" evidence="1">
    <location>
        <position position="526"/>
    </location>
    <ligand>
        <name>ATP</name>
        <dbReference type="ChEBI" id="CHEBI:30616"/>
    </ligand>
</feature>
<feature type="binding site" evidence="1">
    <location>
        <position position="537"/>
    </location>
    <ligand>
        <name>Mg(2+)</name>
        <dbReference type="ChEBI" id="CHEBI:18420"/>
    </ligand>
</feature>
<feature type="binding site" evidence="1">
    <location>
        <position position="539"/>
    </location>
    <ligand>
        <name>Mg(2+)</name>
        <dbReference type="ChEBI" id="CHEBI:18420"/>
    </ligand>
</feature>
<feature type="binding site" evidence="1">
    <location>
        <position position="542"/>
    </location>
    <ligand>
        <name>Mg(2+)</name>
        <dbReference type="ChEBI" id="CHEBI:18420"/>
    </ligand>
</feature>
<feature type="binding site" evidence="1">
    <location>
        <position position="584"/>
    </location>
    <ligand>
        <name>CoA</name>
        <dbReference type="ChEBI" id="CHEBI:57287"/>
    </ligand>
</feature>
<feature type="modified residue" description="N6-acetyllysine; by autocatalysis" evidence="1 3">
    <location>
        <position position="609"/>
    </location>
</feature>
<gene>
    <name evidence="1" type="primary">acs</name>
    <name type="synonym">yfaC</name>
    <name type="ordered locus">b4069</name>
    <name type="ordered locus">JW4030</name>
</gene>
<protein>
    <recommendedName>
        <fullName evidence="1">Acetyl-coenzyme A synthetase</fullName>
        <shortName evidence="1">AcCoA synthetase</shortName>
        <shortName evidence="1">Acs</shortName>
        <ecNumber evidence="1">6.2.1.1</ecNumber>
    </recommendedName>
    <alternativeName>
        <fullName evidence="1">Acetate--CoA ligase</fullName>
    </alternativeName>
    <alternativeName>
        <fullName evidence="1">Acyl-activating enzyme</fullName>
    </alternativeName>
</protein>
<evidence type="ECO:0000255" key="1">
    <source>
        <dbReference type="HAMAP-Rule" id="MF_01123"/>
    </source>
</evidence>
<evidence type="ECO:0000269" key="2">
    <source>
    </source>
</evidence>
<evidence type="ECO:0000269" key="3">
    <source>
    </source>
</evidence>
<evidence type="ECO:0000269" key="4">
    <source>
    </source>
</evidence>
<evidence type="ECO:0000269" key="5">
    <source>
    </source>
</evidence>
<evidence type="ECO:0000305" key="6"/>
<name>ACSA_ECOLI</name>
<comment type="function">
    <text>Catalyzes the conversion of acetate into acetyl-CoA (AcCoA), an essential intermediate at the junction of anabolic and catabolic pathways. Acs undergoes a two-step reaction. In the first half reaction, Acs combines acetate with ATP to form acetyl-adenylate (AcAMP) intermediate. In the second half reaction, it can then transfer the acetyl group from AcAMP to the sulfhydryl group of CoA, forming the product AcCoA.</text>
</comment>
<comment type="function">
    <text>Enables the cell to use acetate during aerobic growth to generate energy via the TCA cycle, and biosynthetic compounds via the glyoxylate shunt. Acetylates CheY, the response regulator involved in flagellar movement and chemotaxis.</text>
</comment>
<comment type="catalytic activity">
    <reaction evidence="1 4 5">
        <text>acetate + ATP + CoA = acetyl-CoA + AMP + diphosphate</text>
        <dbReference type="Rhea" id="RHEA:23176"/>
        <dbReference type="ChEBI" id="CHEBI:30089"/>
        <dbReference type="ChEBI" id="CHEBI:30616"/>
        <dbReference type="ChEBI" id="CHEBI:33019"/>
        <dbReference type="ChEBI" id="CHEBI:57287"/>
        <dbReference type="ChEBI" id="CHEBI:57288"/>
        <dbReference type="ChEBI" id="CHEBI:456215"/>
        <dbReference type="EC" id="6.2.1.1"/>
    </reaction>
</comment>
<comment type="cofactor">
    <cofactor evidence="1 4">
        <name>Mg(2+)</name>
        <dbReference type="ChEBI" id="CHEBI:18420"/>
    </cofactor>
</comment>
<comment type="biophysicochemical properties">
    <kinetics>
        <KM evidence="4">0.15 mM for ATP (at pH 8.5 and 37 degrees Celsius)</KM>
        <KM evidence="4">0.2 mM for CoA (at pH 8.5 and 37 degrees Celsius)</KM>
        <KM evidence="4">0.2 mM for acetate (at pH 8.5 and 37 degrees Celsius)</KM>
        <Vmax evidence="4">100.0 nmol/min/mg enzyme (at pH 8.5 and 37 degrees Celsius)</Vmax>
    </kinetics>
    <phDependence>
        <text evidence="4">Optimum pH is 8.5.</text>
    </phDependence>
</comment>
<comment type="subunit">
    <text>Forms a 1:1 complex with CobB/NAD-dependent deacetylase.</text>
</comment>
<comment type="induction">
    <text evidence="2">By CRP and FNR, in response to rising cAMP levels, falling oxygen partial pressure and changes in carbon flux. May also be induced by acetate.</text>
</comment>
<comment type="PTM">
    <text>Autoacetylated. Deacetylation by CobB activates the enzyme.</text>
</comment>
<comment type="disruption phenotype">
    <text evidence="5">Cells lacking this gene grow as well as wild-type cells at high concentrations (&gt;25 mM) of acetate as the sole carbon source, but grow poorly on lower concentrations (&lt;10 mM).</text>
</comment>
<comment type="similarity">
    <text evidence="1">Belongs to the ATP-dependent AMP-binding enzyme family.</text>
</comment>
<comment type="sequence caution" evidence="6">
    <conflict type="frameshift">
        <sequence resource="EMBL-CDS" id="AAA24715"/>
    </conflict>
</comment>
<reference key="1">
    <citation type="journal article" date="1993" name="Nucleic Acids Res.">
        <title>Analysis of the Escherichia coli genome. IV. DNA sequence of the region from 89.2 to 92.8 minutes.</title>
        <authorList>
            <person name="Blattner F.R."/>
            <person name="Burland V.D."/>
            <person name="Plunkett G. III"/>
            <person name="Sofia H.J."/>
            <person name="Daniels D.L."/>
        </authorList>
    </citation>
    <scope>NUCLEOTIDE SEQUENCE [LARGE SCALE GENOMIC DNA]</scope>
    <source>
        <strain>K12 / MG1655 / ATCC 47076</strain>
    </source>
</reference>
<reference key="2">
    <citation type="journal article" date="1997" name="Science">
        <title>The complete genome sequence of Escherichia coli K-12.</title>
        <authorList>
            <person name="Blattner F.R."/>
            <person name="Plunkett G. III"/>
            <person name="Bloch C.A."/>
            <person name="Perna N.T."/>
            <person name="Burland V."/>
            <person name="Riley M."/>
            <person name="Collado-Vides J."/>
            <person name="Glasner J.D."/>
            <person name="Rode C.K."/>
            <person name="Mayhew G.F."/>
            <person name="Gregor J."/>
            <person name="Davis N.W."/>
            <person name="Kirkpatrick H.A."/>
            <person name="Goeden M.A."/>
            <person name="Rose D.J."/>
            <person name="Mau B."/>
            <person name="Shao Y."/>
        </authorList>
    </citation>
    <scope>NUCLEOTIDE SEQUENCE [LARGE SCALE GENOMIC DNA]</scope>
    <source>
        <strain>K12 / MG1655 / ATCC 47076</strain>
    </source>
</reference>
<reference key="3">
    <citation type="journal article" date="2006" name="Mol. Syst. Biol.">
        <title>Highly accurate genome sequences of Escherichia coli K-12 strains MG1655 and W3110.</title>
        <authorList>
            <person name="Hayashi K."/>
            <person name="Morooka N."/>
            <person name="Yamamoto Y."/>
            <person name="Fujita K."/>
            <person name="Isono K."/>
            <person name="Choi S."/>
            <person name="Ohtsubo E."/>
            <person name="Baba T."/>
            <person name="Wanner B.L."/>
            <person name="Mori H."/>
            <person name="Horiuchi T."/>
        </authorList>
    </citation>
    <scope>NUCLEOTIDE SEQUENCE [LARGE SCALE GENOMIC DNA]</scope>
    <source>
        <strain>K12 / W3110 / ATCC 27325 / DSM 5911</strain>
    </source>
</reference>
<reference key="4">
    <citation type="journal article" date="1992" name="J. Gen. Microbiol.">
        <title>Isolation and characterization of Escherichia coli mutants affected in aerobic respiration: the cloning and nucleotide sequence of ubiG. Identification of an S-adenosylmethionine-binding motif in protein, RNA, and small-molecule methyltransferases.</title>
        <authorList>
            <person name="Wu G."/>
            <person name="Williams H.D."/>
            <person name="Zamanian M."/>
            <person name="Gibson F."/>
            <person name="Poole R.K."/>
        </authorList>
    </citation>
    <scope>NUCLEOTIDE SEQUENCE [GENOMIC DNA] OF 299-652</scope>
    <source>
        <strain>K12</strain>
    </source>
</reference>
<reference key="5">
    <citation type="journal article" date="1977" name="J. Gen. Microbiol.">
        <title>The enzymic interconversion of acetate and acetyl-coenzyme A in Escherichia coli.</title>
        <authorList>
            <person name="Brown T.D."/>
            <person name="Jones-Mortimer M.C."/>
            <person name="Kornberg H.L."/>
        </authorList>
    </citation>
    <scope>FUNCTION</scope>
    <scope>CATALYTIC ACTIVITY</scope>
    <scope>BIOPHYSICOCHEMICAL PROPERTIES</scope>
    <scope>COFACTOR</scope>
</reference>
<reference key="6">
    <citation type="journal article" date="1995" name="J. Bacteriol.">
        <title>Cloning, characterization, and functional expression of acs, the gene which encodes acetyl coenzyme A synthetase in Escherichia coli.</title>
        <authorList>
            <person name="Kumari S."/>
            <person name="Tishel R."/>
            <person name="Eisenbach M."/>
            <person name="Wolfe A.J."/>
        </authorList>
    </citation>
    <scope>FUNCTION</scope>
    <scope>CATALYTIC ACTIVITY</scope>
    <scope>DISRUPTION PHENOTYPE</scope>
</reference>
<reference key="7">
    <citation type="journal article" date="2000" name="J. Bacteriol.">
        <title>Regulation of acetyl coenzyme A synthetase in Escherichia coli.</title>
        <authorList>
            <person name="Kumari S."/>
            <person name="Beatty C.M."/>
            <person name="Browning D.F."/>
            <person name="Busby S.J."/>
            <person name="Simel E.J."/>
            <person name="Hovel-Miner G."/>
            <person name="Wolfe A.J."/>
        </authorList>
    </citation>
    <scope>INDUCTION</scope>
    <source>
        <strain>K12</strain>
    </source>
</reference>
<reference key="8">
    <citation type="journal article" date="1992" name="Biochemistry">
        <title>Acetyladenylate or its derivative acetylates the chemotaxis protein CheY in vitro and increases its activity at the flagellar switch.</title>
        <authorList>
            <person name="Barak R."/>
            <person name="Welch M."/>
            <person name="Yanovsky A."/>
            <person name="Oosawa K."/>
            <person name="Eisenbach M."/>
        </authorList>
    </citation>
    <scope>ACETYLATION OF CHEY</scope>
</reference>
<reference key="9">
    <citation type="journal article" date="1998" name="J. Bacteriol.">
        <title>Both acetate kinase and acetyl coenzyme A synthetase are involved in acetate-stimulated change in the direction of flagellar rotation in Escherichia coli.</title>
        <authorList>
            <person name="Barak R."/>
            <person name="Abouhamad W.N."/>
            <person name="Eisenbach M."/>
        </authorList>
    </citation>
    <scope>INVOLVEMENT IN CHEMOTAXIS</scope>
</reference>
<reference key="10">
    <citation type="journal article" date="2001" name="Mol. Microbiol.">
        <title>Acetylation of the response regulator, CheY, is involved in bacterial chemotaxis.</title>
        <authorList>
            <person name="Barak R."/>
            <person name="Eisenbach M."/>
        </authorList>
    </citation>
    <scope>INVOLVEMENT IN CHEMOTAXIS</scope>
</reference>
<reference key="11">
    <citation type="journal article" date="2004" name="J. Mol. Biol.">
        <title>Structure and substrate binding properties of cobB, a Sir2 homolog protein deacetylase from Escherichia coli.</title>
        <authorList>
            <person name="Zhao K."/>
            <person name="Chai X."/>
            <person name="Marmorstein R."/>
        </authorList>
    </citation>
    <scope>INTERACTION WITH COBB</scope>
    <scope>DEACETYLATION</scope>
</reference>
<reference key="12">
    <citation type="journal article" date="2004" name="J. Mol. Biol.">
        <title>Acetylation of the chemotaxis response regulator CheY by acetyl-CoA synthetase purified from Escherichia coli.</title>
        <authorList>
            <person name="Barak R."/>
            <person name="Prasad K."/>
            <person name="Shainskaya A."/>
            <person name="Wolfe A.J."/>
            <person name="Eisenbach M."/>
        </authorList>
    </citation>
    <scope>ACETYLATION AT LYS-609</scope>
</reference>
<reference key="13">
    <citation type="journal article" date="2010" name="Mol. Microbiol.">
        <title>CobB regulates Escherichia coli chemotaxis by deacetylating the response regulator CheY.</title>
        <authorList>
            <person name="Li R."/>
            <person name="Gu J."/>
            <person name="Chen Y.Y."/>
            <person name="Xiao C.L."/>
            <person name="Wang L.W."/>
            <person name="Zhang Z.P."/>
            <person name="Bi L.J."/>
            <person name="Wei H.P."/>
            <person name="Wang X.D."/>
            <person name="Deng J.Y."/>
            <person name="Zhang X.E."/>
        </authorList>
    </citation>
    <scope>DEACETYLATION</scope>
</reference>
<accession>P27550</accession>
<accession>Q2M6N5</accession>
<sequence length="652" mass="72094">MSQIHKHTIPANIADRCLINPQQYEAMYQQSINVPDTFWGEQGKILDWIKPYQKVKNTSFAPGNVSIKWYEDGTLNLAANCLDRHLQENGDRTAIIWEGDDASQSKHISYKELHRDVCRFANTLLELGIKKGDVVAIYMPMVPEAAVAMLACARIGAVHSVIFGGFSPEAVAGRIIDSNSRLVITSDEGVRAGRSIPLKKNVDDALKNPNVTSVEHVVVLKRTGGKIDWQEGRDLWWHDLVEQASDQHQAEEMNAEDPLFILYTSGSTGKPKGVLHTTGGYLVYAALTFKYVFDYHPGDIYWCTADVGWVTGHSYLLYGPLACGATTLMFEGVPNWPTPARMAQVVDKHQVNILYTAPTAIRALMAEGDKAIEGTDRSSLRILGSVGEPINPEAWEWYWKKIGNEKCPVVDTWWQTETGGFMITPLPGATELKAGSATRPFFGVQPALVDNEGNPLEGATEGSLVITDSWPGQARTLFGDHERFEQTYFSTFKNMYFSGDGARRDEDGYYWITGRVDDVLNVSGHRLGTAEIESALVAHPKIAEAAVVGIPHNIKGQAIYAYVTLNHGEEPSPELYAEVRNWVRKEIGPLATPDVLHWTDSLPKTRSGKIMRRILRKIAAGDTSNLGDTSTLADPGVVEKLLEEKQAIAMPS</sequence>
<dbReference type="EC" id="6.2.1.1" evidence="1"/>
<dbReference type="EMBL" id="U00006">
    <property type="protein sequence ID" value="AAC43163.1"/>
    <property type="molecule type" value="Genomic_DNA"/>
</dbReference>
<dbReference type="EMBL" id="U00096">
    <property type="protein sequence ID" value="AAC77039.1"/>
    <property type="molecule type" value="Genomic_DNA"/>
</dbReference>
<dbReference type="EMBL" id="AP009048">
    <property type="protein sequence ID" value="BAE78071.1"/>
    <property type="molecule type" value="Genomic_DNA"/>
</dbReference>
<dbReference type="EMBL" id="M87509">
    <property type="protein sequence ID" value="AAA24715.1"/>
    <property type="status" value="ALT_FRAME"/>
    <property type="molecule type" value="Genomic_DNA"/>
</dbReference>
<dbReference type="PIR" id="D65215">
    <property type="entry name" value="D65215"/>
</dbReference>
<dbReference type="RefSeq" id="NP_418493.1">
    <property type="nucleotide sequence ID" value="NC_000913.3"/>
</dbReference>
<dbReference type="RefSeq" id="WP_000078239.1">
    <property type="nucleotide sequence ID" value="NZ_STEB01000014.1"/>
</dbReference>
<dbReference type="SMR" id="P27550"/>
<dbReference type="BioGRID" id="4262675">
    <property type="interactions" value="29"/>
</dbReference>
<dbReference type="FunCoup" id="P27550">
    <property type="interactions" value="830"/>
</dbReference>
<dbReference type="IntAct" id="P27550">
    <property type="interactions" value="8"/>
</dbReference>
<dbReference type="STRING" id="511145.b4069"/>
<dbReference type="iPTMnet" id="P27550"/>
<dbReference type="jPOST" id="P27550"/>
<dbReference type="PaxDb" id="511145-b4069"/>
<dbReference type="EnsemblBacteria" id="AAC77039">
    <property type="protein sequence ID" value="AAC77039"/>
    <property type="gene ID" value="b4069"/>
</dbReference>
<dbReference type="GeneID" id="75204212"/>
<dbReference type="GeneID" id="948572"/>
<dbReference type="KEGG" id="ecj:JW4030"/>
<dbReference type="KEGG" id="eco:b4069"/>
<dbReference type="PATRIC" id="fig|1411691.4.peg.2635"/>
<dbReference type="EchoBASE" id="EB1417"/>
<dbReference type="eggNOG" id="COG0365">
    <property type="taxonomic scope" value="Bacteria"/>
</dbReference>
<dbReference type="HOGENOM" id="CLU_000022_3_6_6"/>
<dbReference type="InParanoid" id="P27550"/>
<dbReference type="OMA" id="INVSYNC"/>
<dbReference type="OrthoDB" id="9803968at2"/>
<dbReference type="PhylomeDB" id="P27550"/>
<dbReference type="BioCyc" id="EcoCyc:ACS-MONOMER"/>
<dbReference type="BioCyc" id="MetaCyc:ACS-MONOMER"/>
<dbReference type="SABIO-RK" id="P27550"/>
<dbReference type="PHI-base" id="PHI:9227"/>
<dbReference type="PRO" id="PR:P27550"/>
<dbReference type="Proteomes" id="UP000000625">
    <property type="component" value="Chromosome"/>
</dbReference>
<dbReference type="GO" id="GO:0005829">
    <property type="term" value="C:cytosol"/>
    <property type="evidence" value="ECO:0000314"/>
    <property type="project" value="EcoCyc"/>
</dbReference>
<dbReference type="GO" id="GO:0003987">
    <property type="term" value="F:acetate-CoA ligase activity"/>
    <property type="evidence" value="ECO:0000314"/>
    <property type="project" value="CACAO"/>
</dbReference>
<dbReference type="GO" id="GO:0016208">
    <property type="term" value="F:AMP binding"/>
    <property type="evidence" value="ECO:0007669"/>
    <property type="project" value="InterPro"/>
</dbReference>
<dbReference type="GO" id="GO:0005524">
    <property type="term" value="F:ATP binding"/>
    <property type="evidence" value="ECO:0007669"/>
    <property type="project" value="UniProtKB-KW"/>
</dbReference>
<dbReference type="GO" id="GO:0046872">
    <property type="term" value="F:metal ion binding"/>
    <property type="evidence" value="ECO:0007669"/>
    <property type="project" value="UniProtKB-KW"/>
</dbReference>
<dbReference type="GO" id="GO:0050218">
    <property type="term" value="F:propionate-CoA ligase activity"/>
    <property type="evidence" value="ECO:0000314"/>
    <property type="project" value="EcoCyc"/>
</dbReference>
<dbReference type="GO" id="GO:0033558">
    <property type="term" value="F:protein lysine deacetylase activity"/>
    <property type="evidence" value="ECO:0000314"/>
    <property type="project" value="CACAO"/>
</dbReference>
<dbReference type="GO" id="GO:0045733">
    <property type="term" value="P:acetate catabolic process"/>
    <property type="evidence" value="ECO:0000315"/>
    <property type="project" value="EcoCyc"/>
</dbReference>
<dbReference type="GO" id="GO:0006085">
    <property type="term" value="P:acetyl-CoA biosynthetic process"/>
    <property type="evidence" value="ECO:0000318"/>
    <property type="project" value="GO_Central"/>
</dbReference>
<dbReference type="GO" id="GO:0019427">
    <property type="term" value="P:acetyl-CoA biosynthetic process from acetate"/>
    <property type="evidence" value="ECO:0007669"/>
    <property type="project" value="UniProtKB-UniRule"/>
</dbReference>
<dbReference type="GO" id="GO:0006935">
    <property type="term" value="P:chemotaxis"/>
    <property type="evidence" value="ECO:0007669"/>
    <property type="project" value="UniProtKB-UniRule"/>
</dbReference>
<dbReference type="GO" id="GO:0018394">
    <property type="term" value="P:peptidyl-lysine acetylation"/>
    <property type="evidence" value="ECO:0000314"/>
    <property type="project" value="CACAO"/>
</dbReference>
<dbReference type="GO" id="GO:0034421">
    <property type="term" value="P:post-translational protein acetylation"/>
    <property type="evidence" value="ECO:0000314"/>
    <property type="project" value="CACAO"/>
</dbReference>
<dbReference type="CDD" id="cd05966">
    <property type="entry name" value="ACS"/>
    <property type="match status" value="1"/>
</dbReference>
<dbReference type="FunFam" id="3.30.300.30:FF:000004">
    <property type="entry name" value="Acetyl-coenzyme A synthetase"/>
    <property type="match status" value="1"/>
</dbReference>
<dbReference type="FunFam" id="3.40.50.12780:FF:000001">
    <property type="entry name" value="Acetyl-coenzyme A synthetase"/>
    <property type="match status" value="1"/>
</dbReference>
<dbReference type="Gene3D" id="3.30.300.30">
    <property type="match status" value="1"/>
</dbReference>
<dbReference type="Gene3D" id="3.40.50.12780">
    <property type="entry name" value="N-terminal domain of ligase-like"/>
    <property type="match status" value="1"/>
</dbReference>
<dbReference type="HAMAP" id="MF_01123">
    <property type="entry name" value="Ac_CoA_synth"/>
    <property type="match status" value="1"/>
</dbReference>
<dbReference type="InterPro" id="IPR011904">
    <property type="entry name" value="Ac_CoA_lig"/>
</dbReference>
<dbReference type="InterPro" id="IPR032387">
    <property type="entry name" value="ACAS_N"/>
</dbReference>
<dbReference type="InterPro" id="IPR025110">
    <property type="entry name" value="AMP-bd_C"/>
</dbReference>
<dbReference type="InterPro" id="IPR045851">
    <property type="entry name" value="AMP-bd_C_sf"/>
</dbReference>
<dbReference type="InterPro" id="IPR020845">
    <property type="entry name" value="AMP-binding_CS"/>
</dbReference>
<dbReference type="InterPro" id="IPR000873">
    <property type="entry name" value="AMP-dep_synth/lig_dom"/>
</dbReference>
<dbReference type="InterPro" id="IPR042099">
    <property type="entry name" value="ANL_N_sf"/>
</dbReference>
<dbReference type="NCBIfam" id="TIGR02188">
    <property type="entry name" value="Ac_CoA_lig_AcsA"/>
    <property type="match status" value="1"/>
</dbReference>
<dbReference type="NCBIfam" id="NF001208">
    <property type="entry name" value="PRK00174.1"/>
    <property type="match status" value="1"/>
</dbReference>
<dbReference type="PANTHER" id="PTHR24095">
    <property type="entry name" value="ACETYL-COENZYME A SYNTHETASE"/>
    <property type="match status" value="1"/>
</dbReference>
<dbReference type="PANTHER" id="PTHR24095:SF243">
    <property type="entry name" value="ACETYL-COENZYME A SYNTHETASE"/>
    <property type="match status" value="1"/>
</dbReference>
<dbReference type="Pfam" id="PF16177">
    <property type="entry name" value="ACAS_N"/>
    <property type="match status" value="1"/>
</dbReference>
<dbReference type="Pfam" id="PF00501">
    <property type="entry name" value="AMP-binding"/>
    <property type="match status" value="1"/>
</dbReference>
<dbReference type="Pfam" id="PF13193">
    <property type="entry name" value="AMP-binding_C"/>
    <property type="match status" value="1"/>
</dbReference>
<dbReference type="SUPFAM" id="SSF56801">
    <property type="entry name" value="Acetyl-CoA synthetase-like"/>
    <property type="match status" value="1"/>
</dbReference>
<dbReference type="PROSITE" id="PS00455">
    <property type="entry name" value="AMP_BINDING"/>
    <property type="match status" value="1"/>
</dbReference>
<organism>
    <name type="scientific">Escherichia coli (strain K12)</name>
    <dbReference type="NCBI Taxonomy" id="83333"/>
    <lineage>
        <taxon>Bacteria</taxon>
        <taxon>Pseudomonadati</taxon>
        <taxon>Pseudomonadota</taxon>
        <taxon>Gammaproteobacteria</taxon>
        <taxon>Enterobacterales</taxon>
        <taxon>Enterobacteriaceae</taxon>
        <taxon>Escherichia</taxon>
    </lineage>
</organism>
<keyword id="KW-0007">Acetylation</keyword>
<keyword id="KW-0067">ATP-binding</keyword>
<keyword id="KW-0436">Ligase</keyword>
<keyword id="KW-0460">Magnesium</keyword>
<keyword id="KW-0479">Metal-binding</keyword>
<keyword id="KW-0547">Nucleotide-binding</keyword>
<keyword id="KW-1185">Reference proteome</keyword>
<proteinExistence type="evidence at protein level"/>